<comment type="function">
    <text evidence="1">Participates in pre-mRNA U12-dependent splicing, performed by the minor spliceosome which removes U12-type introns. U12-type introns comprises less than 1% of all non-coding sequences. Binds to the 3'-stem-loop of m(7)G-capped U12 snRNA (By similarity).</text>
</comment>
<comment type="subunit">
    <text evidence="1">Component of the U11/U12 snRNPs that are part of the U12-type spliceosome. Found in a complex with m(7)G-capped U12 snRNA. Interacts with PDCD7 (By similarity).</text>
</comment>
<comment type="subcellular location">
    <subcellularLocation>
        <location evidence="1">Nucleus</location>
    </subcellularLocation>
</comment>
<accession>Q3MHP0</accession>
<keyword id="KW-0539">Nucleus</keyword>
<keyword id="KW-0597">Phosphoprotein</keyword>
<keyword id="KW-1185">Reference proteome</keyword>
<keyword id="KW-0677">Repeat</keyword>
<keyword id="KW-0694">RNA-binding</keyword>
<proteinExistence type="evidence at transcript level"/>
<sequence>MAAPEQPLPMSRGCQNSSSLSPPRGDRTLLVRHLPAELTAEEKEDLLKYFGAQSVRDLSDKGRLKHTAFATFPNEKTAVKALTRLHQLKLLGHTLVVEFAKEQDRVHSPCPSLGTEKKKRSDDPVEDDKEKKELDCLTIENGIAPNHGLTFPLNSCLKYMYPPPSSTILANIVNALASVPKFYVQVLHLMNKMNLPTPFGPITTRPPMYEDYMPLHAPLPPTSPQPPEEPPLPDEDEELSSKESEYESSDDEDRQRMTKLMELANLQPKRPKPIKQRHVRKKRKIKDMLNIPSSASHSLHPVLLPSDVFDQPQPVGNKKIEFHISTDMQVAFKKDLEKQQNCEEENSDLPATEADASNIGFGKIFPQPNLNITEEIKDDSDEMPSECISRRELEKGRISREEMETLSVFRSYEPGEPNCRIYVKNLAKHVQEKDLKFIFGRYVDFSSETQRIMFDIRLMKEGRMKGQAFIGLPNEKAAAKALKEANGYVLFGKPMVVQFARSARPKQDSKEGKRKC</sequence>
<dbReference type="EMBL" id="BC105165">
    <property type="protein sequence ID" value="AAI05166.1"/>
    <property type="molecule type" value="mRNA"/>
</dbReference>
<dbReference type="RefSeq" id="NP_001070585.1">
    <property type="nucleotide sequence ID" value="NM_001077117.2"/>
</dbReference>
<dbReference type="SMR" id="Q3MHP0"/>
<dbReference type="FunCoup" id="Q3MHP0">
    <property type="interactions" value="1499"/>
</dbReference>
<dbReference type="STRING" id="9913.ENSBTAP00000062208"/>
<dbReference type="PaxDb" id="9913-ENSBTAP00000025416"/>
<dbReference type="GeneID" id="768060"/>
<dbReference type="KEGG" id="bta:768060"/>
<dbReference type="CTD" id="55599"/>
<dbReference type="eggNOG" id="KOG4206">
    <property type="taxonomic scope" value="Eukaryota"/>
</dbReference>
<dbReference type="InParanoid" id="Q3MHP0"/>
<dbReference type="OrthoDB" id="277802at2759"/>
<dbReference type="Proteomes" id="UP000009136">
    <property type="component" value="Unplaced"/>
</dbReference>
<dbReference type="GO" id="GO:0005689">
    <property type="term" value="C:U12-type spliceosomal complex"/>
    <property type="evidence" value="ECO:0000318"/>
    <property type="project" value="GO_Central"/>
</dbReference>
<dbReference type="GO" id="GO:0097157">
    <property type="term" value="F:pre-mRNA intronic binding"/>
    <property type="evidence" value="ECO:0000318"/>
    <property type="project" value="GO_Central"/>
</dbReference>
<dbReference type="GO" id="GO:0030626">
    <property type="term" value="F:U12 snRNA binding"/>
    <property type="evidence" value="ECO:0000318"/>
    <property type="project" value="GO_Central"/>
</dbReference>
<dbReference type="GO" id="GO:0000398">
    <property type="term" value="P:mRNA splicing, via spliceosome"/>
    <property type="evidence" value="ECO:0000318"/>
    <property type="project" value="GO_Central"/>
</dbReference>
<dbReference type="CDD" id="cd12238">
    <property type="entry name" value="RRM1_RBM40_like"/>
    <property type="match status" value="1"/>
</dbReference>
<dbReference type="CDD" id="cd12239">
    <property type="entry name" value="RRM2_RBM40_like"/>
    <property type="match status" value="1"/>
</dbReference>
<dbReference type="FunFam" id="3.30.70.330:FF:000289">
    <property type="entry name" value="RNA-binding protein 40 isoform X1"/>
    <property type="match status" value="1"/>
</dbReference>
<dbReference type="FunFam" id="3.30.70.330:FF:000207">
    <property type="entry name" value="RNA-binding region (RNP1, RRM)-containing 3"/>
    <property type="match status" value="1"/>
</dbReference>
<dbReference type="Gene3D" id="3.30.70.330">
    <property type="match status" value="2"/>
</dbReference>
<dbReference type="Gene3D" id="6.10.250.610">
    <property type="match status" value="1"/>
</dbReference>
<dbReference type="InterPro" id="IPR012677">
    <property type="entry name" value="Nucleotide-bd_a/b_plait_sf"/>
</dbReference>
<dbReference type="InterPro" id="IPR035979">
    <property type="entry name" value="RBD_domain_sf"/>
</dbReference>
<dbReference type="InterPro" id="IPR034147">
    <property type="entry name" value="RBM40_RRM1"/>
</dbReference>
<dbReference type="InterPro" id="IPR045164">
    <property type="entry name" value="RBM41/RNPC3"/>
</dbReference>
<dbReference type="InterPro" id="IPR000504">
    <property type="entry name" value="RRM_dom"/>
</dbReference>
<dbReference type="PANTHER" id="PTHR16105">
    <property type="entry name" value="RNA-BINDING REGION-CONTAINING PROTEIN 3"/>
    <property type="match status" value="1"/>
</dbReference>
<dbReference type="PANTHER" id="PTHR16105:SF0">
    <property type="entry name" value="RNA-BINDING REGION-CONTAINING PROTEIN 3"/>
    <property type="match status" value="1"/>
</dbReference>
<dbReference type="Pfam" id="PF00076">
    <property type="entry name" value="RRM_1"/>
    <property type="match status" value="2"/>
</dbReference>
<dbReference type="SMART" id="SM00360">
    <property type="entry name" value="RRM"/>
    <property type="match status" value="2"/>
</dbReference>
<dbReference type="SUPFAM" id="SSF54928">
    <property type="entry name" value="RNA-binding domain, RBD"/>
    <property type="match status" value="2"/>
</dbReference>
<dbReference type="PROSITE" id="PS50102">
    <property type="entry name" value="RRM"/>
    <property type="match status" value="2"/>
</dbReference>
<protein>
    <recommendedName>
        <fullName>RNA-binding region-containing protein 3</fullName>
    </recommendedName>
    <alternativeName>
        <fullName>RNA-binding motif protein 40</fullName>
        <shortName>RNA-binding protein 40</shortName>
    </alternativeName>
</protein>
<feature type="chain" id="PRO_0000311111" description="RNA-binding region-containing protein 3">
    <location>
        <begin position="1"/>
        <end position="516"/>
    </location>
</feature>
<feature type="domain" description="RRM 1" evidence="3">
    <location>
        <begin position="27"/>
        <end position="102"/>
    </location>
</feature>
<feature type="domain" description="RRM 2" evidence="3">
    <location>
        <begin position="419"/>
        <end position="502"/>
    </location>
</feature>
<feature type="region of interest" description="Disordered" evidence="4">
    <location>
        <begin position="1"/>
        <end position="27"/>
    </location>
</feature>
<feature type="region of interest" description="Disordered" evidence="4">
    <location>
        <begin position="106"/>
        <end position="130"/>
    </location>
</feature>
<feature type="region of interest" description="Disordered" evidence="4">
    <location>
        <begin position="210"/>
        <end position="254"/>
    </location>
</feature>
<feature type="region of interest" description="Disordered" evidence="4">
    <location>
        <begin position="264"/>
        <end position="283"/>
    </location>
</feature>
<feature type="compositionally biased region" description="Basic and acidic residues" evidence="4">
    <location>
        <begin position="115"/>
        <end position="130"/>
    </location>
</feature>
<feature type="compositionally biased region" description="Pro residues" evidence="4">
    <location>
        <begin position="217"/>
        <end position="230"/>
    </location>
</feature>
<feature type="compositionally biased region" description="Basic residues" evidence="4">
    <location>
        <begin position="269"/>
        <end position="283"/>
    </location>
</feature>
<feature type="modified residue" description="Phosphoserine" evidence="2">
    <location>
        <position position="21"/>
    </location>
</feature>
<feature type="modified residue" description="Phosphoserine" evidence="2">
    <location>
        <position position="108"/>
    </location>
</feature>
<organism>
    <name type="scientific">Bos taurus</name>
    <name type="common">Bovine</name>
    <dbReference type="NCBI Taxonomy" id="9913"/>
    <lineage>
        <taxon>Eukaryota</taxon>
        <taxon>Metazoa</taxon>
        <taxon>Chordata</taxon>
        <taxon>Craniata</taxon>
        <taxon>Vertebrata</taxon>
        <taxon>Euteleostomi</taxon>
        <taxon>Mammalia</taxon>
        <taxon>Eutheria</taxon>
        <taxon>Laurasiatheria</taxon>
        <taxon>Artiodactyla</taxon>
        <taxon>Ruminantia</taxon>
        <taxon>Pecora</taxon>
        <taxon>Bovidae</taxon>
        <taxon>Bovinae</taxon>
        <taxon>Bos</taxon>
    </lineage>
</organism>
<reference key="1">
    <citation type="submission" date="2005-09" db="EMBL/GenBank/DDBJ databases">
        <authorList>
            <consortium name="NIH - Mammalian Gene Collection (MGC) project"/>
        </authorList>
    </citation>
    <scope>NUCLEOTIDE SEQUENCE [LARGE SCALE MRNA]</scope>
    <source>
        <strain>Crossbred X Angus</strain>
        <tissue>Liver</tissue>
    </source>
</reference>
<gene>
    <name type="primary">RNPC3</name>
    <name type="synonym">RBM40</name>
</gene>
<name>RNPC3_BOVIN</name>
<evidence type="ECO:0000250" key="1"/>
<evidence type="ECO:0000250" key="2">
    <source>
        <dbReference type="UniProtKB" id="Q96LT9"/>
    </source>
</evidence>
<evidence type="ECO:0000255" key="3">
    <source>
        <dbReference type="PROSITE-ProRule" id="PRU00176"/>
    </source>
</evidence>
<evidence type="ECO:0000256" key="4">
    <source>
        <dbReference type="SAM" id="MobiDB-lite"/>
    </source>
</evidence>